<sequence length="1184" mass="135084">MYIEDIIIDGFKSYANRTVIEGFDPTFNAITGLNGSGKSNILDSICFVLGISNLSQVRVDSLQELVYKKGQAGITKASVTITFNNSDKKQSPAGYEHLDKITVTRQVAIGGRNKYLINGHNAQLSRVQDLFHSVQLNVNNPHFLIMQGRITKVLNMKPPEILAMIEEAAGTRMFEMKKNSALNTIEKKQKKVDEITKVLAEEITPTLDKLRGERTSYMKFTNNQTLIDRLQRFIIAYEYYTYEKKLESSEFESFKAEIDKGQKRKKDLTLKSTDLKAKISELAKQREKETNLEEMDQQEQKLSKELVKYQTSHKHQKESLDKEEGAINNLANTREEIKQSIQQKQKEKQSMEKKIQSIVEENQQINAELKTLQNKHNTMTTGISTGADGSSAAEDGSYTEQLMEAKKTAVNAASEYKQAEFRVKHLQSELIAKRKAITQEQTDHKKLQAEQELVEREIQQLTRSIQELQLDNSKQQELTEKKRQLEPLVSKLREEVGNASAQLSGLEFNYTDPSKSFDRSKVKGIVANLITLKDVETATALEICASGKLYNIVIEDDETGKALLSKGQLKRRVTLLPLNKVEGRSIDPQKIKNAQKIAPNGAVKPAIEFVEYDKELQPAMNFVFGSTFIATDKKYAQKAAFDSSIKVRTISLEGDEYNPAGSLTGGSRPPSGSILTQIQRLNENNRCLRENQSQLEHINFELVQLKSVTDRFKQLEQQLNIKQHAASLIAQRFQLNPHHQLLESIKEMEKSIESDTQLITNSMIKEKEALEKVKQLESQVNDFQSIRESQLKDLEKKIQITKEKCIKSNKIVKGEQVFIEKLDLEIQEMDNELENLSKETQGNQGTISKMRKDVDTLARSISETNKQIQDIRETLSEIRKDMAQKNDAIRSLHQELEKIQSEITEIDMSTEKLKSRMNRVDKDRQEASKWLEAAIKKHTWIKNEKQLFNRPGSDFDFNATDPSKANSEYIKLQEEQEKLSKTINRKVMSMFEKAEQEYQELMEKKKIIENDKSKIEHVIRELDEKKNESLRTTWKKVNKDFGSIFSTLLPGTSAKLEPPEGQNELFGLEVKVAFGDVWKETLSELSGGQKSLLALSLILSLLLFKPAPMYILDEIDAALDLSHTQNIGMMLKQHFTSSQFIVVSLKEGMFTNANVLFETKFIDGVSKVHRTVFNKKDKQVGKKK</sequence>
<protein>
    <recommendedName>
        <fullName>Structural maintenance of chromosomes protein 2</fullName>
    </recommendedName>
</protein>
<name>SMC2_DICDI</name>
<accession>Q54PK4</accession>
<evidence type="ECO:0000250" key="1"/>
<evidence type="ECO:0000255" key="2"/>
<evidence type="ECO:0000305" key="3"/>
<reference key="1">
    <citation type="journal article" date="2005" name="Nature">
        <title>The genome of the social amoeba Dictyostelium discoideum.</title>
        <authorList>
            <person name="Eichinger L."/>
            <person name="Pachebat J.A."/>
            <person name="Gloeckner G."/>
            <person name="Rajandream M.A."/>
            <person name="Sucgang R."/>
            <person name="Berriman M."/>
            <person name="Song J."/>
            <person name="Olsen R."/>
            <person name="Szafranski K."/>
            <person name="Xu Q."/>
            <person name="Tunggal B."/>
            <person name="Kummerfeld S."/>
            <person name="Madera M."/>
            <person name="Konfortov B.A."/>
            <person name="Rivero F."/>
            <person name="Bankier A.T."/>
            <person name="Lehmann R."/>
            <person name="Hamlin N."/>
            <person name="Davies R."/>
            <person name="Gaudet P."/>
            <person name="Fey P."/>
            <person name="Pilcher K."/>
            <person name="Chen G."/>
            <person name="Saunders D."/>
            <person name="Sodergren E.J."/>
            <person name="Davis P."/>
            <person name="Kerhornou A."/>
            <person name="Nie X."/>
            <person name="Hall N."/>
            <person name="Anjard C."/>
            <person name="Hemphill L."/>
            <person name="Bason N."/>
            <person name="Farbrother P."/>
            <person name="Desany B."/>
            <person name="Just E."/>
            <person name="Morio T."/>
            <person name="Rost R."/>
            <person name="Churcher C.M."/>
            <person name="Cooper J."/>
            <person name="Haydock S."/>
            <person name="van Driessche N."/>
            <person name="Cronin A."/>
            <person name="Goodhead I."/>
            <person name="Muzny D.M."/>
            <person name="Mourier T."/>
            <person name="Pain A."/>
            <person name="Lu M."/>
            <person name="Harper D."/>
            <person name="Lindsay R."/>
            <person name="Hauser H."/>
            <person name="James K.D."/>
            <person name="Quiles M."/>
            <person name="Madan Babu M."/>
            <person name="Saito T."/>
            <person name="Buchrieser C."/>
            <person name="Wardroper A."/>
            <person name="Felder M."/>
            <person name="Thangavelu M."/>
            <person name="Johnson D."/>
            <person name="Knights A."/>
            <person name="Loulseged H."/>
            <person name="Mungall K.L."/>
            <person name="Oliver K."/>
            <person name="Price C."/>
            <person name="Quail M.A."/>
            <person name="Urushihara H."/>
            <person name="Hernandez J."/>
            <person name="Rabbinowitsch E."/>
            <person name="Steffen D."/>
            <person name="Sanders M."/>
            <person name="Ma J."/>
            <person name="Kohara Y."/>
            <person name="Sharp S."/>
            <person name="Simmonds M.N."/>
            <person name="Spiegler S."/>
            <person name="Tivey A."/>
            <person name="Sugano S."/>
            <person name="White B."/>
            <person name="Walker D."/>
            <person name="Woodward J.R."/>
            <person name="Winckler T."/>
            <person name="Tanaka Y."/>
            <person name="Shaulsky G."/>
            <person name="Schleicher M."/>
            <person name="Weinstock G.M."/>
            <person name="Rosenthal A."/>
            <person name="Cox E.C."/>
            <person name="Chisholm R.L."/>
            <person name="Gibbs R.A."/>
            <person name="Loomis W.F."/>
            <person name="Platzer M."/>
            <person name="Kay R.R."/>
            <person name="Williams J.G."/>
            <person name="Dear P.H."/>
            <person name="Noegel A.A."/>
            <person name="Barrell B.G."/>
            <person name="Kuspa A."/>
        </authorList>
    </citation>
    <scope>NUCLEOTIDE SEQUENCE [LARGE SCALE GENOMIC DNA]</scope>
    <source>
        <strain>AX4</strain>
    </source>
</reference>
<feature type="chain" id="PRO_0000328135" description="Structural maintenance of chromosomes protein 2">
    <location>
        <begin position="1"/>
        <end position="1184"/>
    </location>
</feature>
<feature type="domain" description="SMC hinge">
    <location>
        <begin position="520"/>
        <end position="639"/>
    </location>
</feature>
<feature type="binding site" evidence="2">
    <location>
        <begin position="32"/>
        <end position="39"/>
    </location>
    <ligand>
        <name>ATP</name>
        <dbReference type="ChEBI" id="CHEBI:30616"/>
    </ligand>
</feature>
<dbReference type="EMBL" id="AAFI02000066">
    <property type="protein sequence ID" value="EAL65176.1"/>
    <property type="molecule type" value="Genomic_DNA"/>
</dbReference>
<dbReference type="RefSeq" id="XP_638528.1">
    <property type="nucleotide sequence ID" value="XM_633436.1"/>
</dbReference>
<dbReference type="SMR" id="Q54PK4"/>
<dbReference type="FunCoup" id="Q54PK4">
    <property type="interactions" value="704"/>
</dbReference>
<dbReference type="STRING" id="44689.Q54PK4"/>
<dbReference type="PaxDb" id="44689-DDB0219933"/>
<dbReference type="EnsemblProtists" id="EAL65176">
    <property type="protein sequence ID" value="EAL65176"/>
    <property type="gene ID" value="DDB_G0284499"/>
</dbReference>
<dbReference type="GeneID" id="8624621"/>
<dbReference type="KEGG" id="ddi:DDB_G0284499"/>
<dbReference type="dictyBase" id="DDB_G0284499">
    <property type="gene designation" value="smc2"/>
</dbReference>
<dbReference type="VEuPathDB" id="AmoebaDB:DDB_G0284499"/>
<dbReference type="eggNOG" id="KOG0933">
    <property type="taxonomic scope" value="Eukaryota"/>
</dbReference>
<dbReference type="HOGENOM" id="CLU_001042_9_0_1"/>
<dbReference type="InParanoid" id="Q54PK4"/>
<dbReference type="OMA" id="THNKIAM"/>
<dbReference type="PhylomeDB" id="Q54PK4"/>
<dbReference type="Reactome" id="R-DDI-2299718">
    <property type="pathway name" value="Condensation of Prophase Chromosomes"/>
</dbReference>
<dbReference type="Reactome" id="R-DDI-2514853">
    <property type="pathway name" value="Condensation of Prometaphase Chromosomes"/>
</dbReference>
<dbReference type="PRO" id="PR:Q54PK4"/>
<dbReference type="Proteomes" id="UP000002195">
    <property type="component" value="Chromosome 4"/>
</dbReference>
<dbReference type="GO" id="GO:0000785">
    <property type="term" value="C:chromatin"/>
    <property type="evidence" value="ECO:0000318"/>
    <property type="project" value="GO_Central"/>
</dbReference>
<dbReference type="GO" id="GO:0000793">
    <property type="term" value="C:condensed chromosome"/>
    <property type="evidence" value="ECO:0000318"/>
    <property type="project" value="GO_Central"/>
</dbReference>
<dbReference type="GO" id="GO:0000796">
    <property type="term" value="C:condensin complex"/>
    <property type="evidence" value="ECO:0000318"/>
    <property type="project" value="GO_Central"/>
</dbReference>
<dbReference type="GO" id="GO:0005634">
    <property type="term" value="C:nucleus"/>
    <property type="evidence" value="ECO:0000250"/>
    <property type="project" value="dictyBase"/>
</dbReference>
<dbReference type="GO" id="GO:0005524">
    <property type="term" value="F:ATP binding"/>
    <property type="evidence" value="ECO:0007669"/>
    <property type="project" value="UniProtKB-KW"/>
</dbReference>
<dbReference type="GO" id="GO:0016887">
    <property type="term" value="F:ATP hydrolysis activity"/>
    <property type="evidence" value="ECO:0007669"/>
    <property type="project" value="InterPro"/>
</dbReference>
<dbReference type="GO" id="GO:0003682">
    <property type="term" value="F:chromatin binding"/>
    <property type="evidence" value="ECO:0000318"/>
    <property type="project" value="GO_Central"/>
</dbReference>
<dbReference type="GO" id="GO:0051301">
    <property type="term" value="P:cell division"/>
    <property type="evidence" value="ECO:0007669"/>
    <property type="project" value="UniProtKB-KW"/>
</dbReference>
<dbReference type="GO" id="GO:0007076">
    <property type="term" value="P:mitotic chromosome condensation"/>
    <property type="evidence" value="ECO:0000250"/>
    <property type="project" value="dictyBase"/>
</dbReference>
<dbReference type="CDD" id="cd03273">
    <property type="entry name" value="ABC_SMC2_euk"/>
    <property type="match status" value="1"/>
</dbReference>
<dbReference type="FunFam" id="1.20.1060.20:FF:000005">
    <property type="entry name" value="Structural maintenance of chromosomes 2"/>
    <property type="match status" value="1"/>
</dbReference>
<dbReference type="FunFam" id="3.40.50.300:FF:000278">
    <property type="entry name" value="Structural maintenance of chromosomes 2"/>
    <property type="match status" value="1"/>
</dbReference>
<dbReference type="FunFam" id="3.40.50.300:FF:000385">
    <property type="entry name" value="Structural maintenance of chromosomes 2"/>
    <property type="match status" value="1"/>
</dbReference>
<dbReference type="Gene3D" id="1.10.287.1490">
    <property type="match status" value="1"/>
</dbReference>
<dbReference type="Gene3D" id="1.20.1060.20">
    <property type="match status" value="1"/>
</dbReference>
<dbReference type="Gene3D" id="3.30.70.1620">
    <property type="match status" value="1"/>
</dbReference>
<dbReference type="Gene3D" id="3.40.50.300">
    <property type="entry name" value="P-loop containing nucleotide triphosphate hydrolases"/>
    <property type="match status" value="2"/>
</dbReference>
<dbReference type="InterPro" id="IPR027417">
    <property type="entry name" value="P-loop_NTPase"/>
</dbReference>
<dbReference type="InterPro" id="IPR003395">
    <property type="entry name" value="RecF/RecN/SMC_N"/>
</dbReference>
<dbReference type="InterPro" id="IPR024704">
    <property type="entry name" value="SMC"/>
</dbReference>
<dbReference type="InterPro" id="IPR027120">
    <property type="entry name" value="Smc2_ABC"/>
</dbReference>
<dbReference type="InterPro" id="IPR010935">
    <property type="entry name" value="SMC_hinge"/>
</dbReference>
<dbReference type="InterPro" id="IPR036277">
    <property type="entry name" value="SMC_hinge_sf"/>
</dbReference>
<dbReference type="PANTHER" id="PTHR43977">
    <property type="entry name" value="STRUCTURAL MAINTENANCE OF CHROMOSOMES PROTEIN 3"/>
    <property type="match status" value="1"/>
</dbReference>
<dbReference type="Pfam" id="PF06470">
    <property type="entry name" value="SMC_hinge"/>
    <property type="match status" value="1"/>
</dbReference>
<dbReference type="Pfam" id="PF02463">
    <property type="entry name" value="SMC_N"/>
    <property type="match status" value="1"/>
</dbReference>
<dbReference type="PIRSF" id="PIRSF005719">
    <property type="entry name" value="SMC"/>
    <property type="match status" value="1"/>
</dbReference>
<dbReference type="SMART" id="SM00968">
    <property type="entry name" value="SMC_hinge"/>
    <property type="match status" value="1"/>
</dbReference>
<dbReference type="SUPFAM" id="SSF52540">
    <property type="entry name" value="P-loop containing nucleoside triphosphate hydrolases"/>
    <property type="match status" value="2"/>
</dbReference>
<dbReference type="SUPFAM" id="SSF75553">
    <property type="entry name" value="Smc hinge domain"/>
    <property type="match status" value="1"/>
</dbReference>
<comment type="function">
    <text evidence="1">Central component of the condensin complex, a complex required for conversion of interphase chromatin into mitotic-like condense chromosomes. The condensin complex probably introduces positive supercoils into relaxed DNA in the presence of type I topoisomerases and converts nicked DNA into positive knotted forms in the presence of type II topoisomerases (By similarity).</text>
</comment>
<comment type="subunit">
    <text evidence="1">Forms a heterodimer with smc4. Component of the condensin complex, which contains the smc2-smc4 heterodimer (By similarity).</text>
</comment>
<comment type="subcellular location">
    <subcellularLocation>
        <location evidence="1">Nucleus</location>
    </subcellularLocation>
</comment>
<comment type="domain">
    <text evidence="1">The SMC hinge domain, which separates the large intramolecular coiled coil regions, allows the heterodimerization with smc4 forming a V-shaped heterodimer.</text>
</comment>
<comment type="similarity">
    <text evidence="3">Belongs to the SMC family. SMC2 subfamily.</text>
</comment>
<organism>
    <name type="scientific">Dictyostelium discoideum</name>
    <name type="common">Social amoeba</name>
    <dbReference type="NCBI Taxonomy" id="44689"/>
    <lineage>
        <taxon>Eukaryota</taxon>
        <taxon>Amoebozoa</taxon>
        <taxon>Evosea</taxon>
        <taxon>Eumycetozoa</taxon>
        <taxon>Dictyostelia</taxon>
        <taxon>Dictyosteliales</taxon>
        <taxon>Dictyosteliaceae</taxon>
        <taxon>Dictyostelium</taxon>
    </lineage>
</organism>
<keyword id="KW-0067">ATP-binding</keyword>
<keyword id="KW-0131">Cell cycle</keyword>
<keyword id="KW-0132">Cell division</keyword>
<keyword id="KW-0175">Coiled coil</keyword>
<keyword id="KW-0226">DNA condensation</keyword>
<keyword id="KW-0498">Mitosis</keyword>
<keyword id="KW-0547">Nucleotide-binding</keyword>
<keyword id="KW-0539">Nucleus</keyword>
<keyword id="KW-1185">Reference proteome</keyword>
<gene>
    <name type="primary">smc2</name>
    <name type="ORF">DDB_G0284499</name>
</gene>
<proteinExistence type="inferred from homology"/>